<protein>
    <recommendedName>
        <fullName evidence="1">Thiamine-phosphate synthase</fullName>
        <shortName evidence="1">TP synthase</shortName>
        <shortName evidence="1">TPS</shortName>
        <ecNumber evidence="1">2.5.1.3</ecNumber>
    </recommendedName>
    <alternativeName>
        <fullName evidence="1">Thiamine-phosphate pyrophosphorylase</fullName>
        <shortName evidence="1">TMP pyrophosphorylase</shortName>
        <shortName evidence="1">TMP-PPase</shortName>
    </alternativeName>
</protein>
<organism>
    <name type="scientific">Limosilactobacillus reuteri (strain DSM 20016)</name>
    <name type="common">Lactobacillus reuteri</name>
    <dbReference type="NCBI Taxonomy" id="557436"/>
    <lineage>
        <taxon>Bacteria</taxon>
        <taxon>Bacillati</taxon>
        <taxon>Bacillota</taxon>
        <taxon>Bacilli</taxon>
        <taxon>Lactobacillales</taxon>
        <taxon>Lactobacillaceae</taxon>
        <taxon>Limosilactobacillus</taxon>
    </lineage>
</organism>
<accession>A5VKA1</accession>
<comment type="function">
    <text evidence="1">Condenses 4-methyl-5-(beta-hydroxyethyl)thiazole monophosphate (THZ-P) and 2-methyl-4-amino-5-hydroxymethyl pyrimidine pyrophosphate (HMP-PP) to form thiamine monophosphate (TMP).</text>
</comment>
<comment type="catalytic activity">
    <reaction evidence="1">
        <text>2-[(2R,5Z)-2-carboxy-4-methylthiazol-5(2H)-ylidene]ethyl phosphate + 4-amino-2-methyl-5-(diphosphooxymethyl)pyrimidine + 2 H(+) = thiamine phosphate + CO2 + diphosphate</text>
        <dbReference type="Rhea" id="RHEA:47844"/>
        <dbReference type="ChEBI" id="CHEBI:15378"/>
        <dbReference type="ChEBI" id="CHEBI:16526"/>
        <dbReference type="ChEBI" id="CHEBI:33019"/>
        <dbReference type="ChEBI" id="CHEBI:37575"/>
        <dbReference type="ChEBI" id="CHEBI:57841"/>
        <dbReference type="ChEBI" id="CHEBI:62899"/>
        <dbReference type="EC" id="2.5.1.3"/>
    </reaction>
</comment>
<comment type="catalytic activity">
    <reaction evidence="1">
        <text>2-(2-carboxy-4-methylthiazol-5-yl)ethyl phosphate + 4-amino-2-methyl-5-(diphosphooxymethyl)pyrimidine + 2 H(+) = thiamine phosphate + CO2 + diphosphate</text>
        <dbReference type="Rhea" id="RHEA:47848"/>
        <dbReference type="ChEBI" id="CHEBI:15378"/>
        <dbReference type="ChEBI" id="CHEBI:16526"/>
        <dbReference type="ChEBI" id="CHEBI:33019"/>
        <dbReference type="ChEBI" id="CHEBI:37575"/>
        <dbReference type="ChEBI" id="CHEBI:57841"/>
        <dbReference type="ChEBI" id="CHEBI:62890"/>
        <dbReference type="EC" id="2.5.1.3"/>
    </reaction>
</comment>
<comment type="catalytic activity">
    <reaction evidence="1">
        <text>4-methyl-5-(2-phosphooxyethyl)-thiazole + 4-amino-2-methyl-5-(diphosphooxymethyl)pyrimidine + H(+) = thiamine phosphate + diphosphate</text>
        <dbReference type="Rhea" id="RHEA:22328"/>
        <dbReference type="ChEBI" id="CHEBI:15378"/>
        <dbReference type="ChEBI" id="CHEBI:33019"/>
        <dbReference type="ChEBI" id="CHEBI:37575"/>
        <dbReference type="ChEBI" id="CHEBI:57841"/>
        <dbReference type="ChEBI" id="CHEBI:58296"/>
        <dbReference type="EC" id="2.5.1.3"/>
    </reaction>
</comment>
<comment type="cofactor">
    <cofactor evidence="1">
        <name>Mg(2+)</name>
        <dbReference type="ChEBI" id="CHEBI:18420"/>
    </cofactor>
    <text evidence="1">Binds 1 Mg(2+) ion per subunit.</text>
</comment>
<comment type="pathway">
    <text evidence="1">Cofactor biosynthesis; thiamine diphosphate biosynthesis; thiamine phosphate from 4-amino-2-methyl-5-diphosphomethylpyrimidine and 4-methyl-5-(2-phosphoethyl)-thiazole: step 1/1.</text>
</comment>
<comment type="similarity">
    <text evidence="1">Belongs to the thiamine-phosphate synthase family.</text>
</comment>
<dbReference type="EC" id="2.5.1.3" evidence="1"/>
<dbReference type="EMBL" id="CP000705">
    <property type="protein sequence ID" value="ABQ83275.1"/>
    <property type="molecule type" value="Genomic_DNA"/>
</dbReference>
<dbReference type="RefSeq" id="WP_003667687.1">
    <property type="nucleotide sequence ID" value="NC_009513.1"/>
</dbReference>
<dbReference type="SMR" id="A5VKA1"/>
<dbReference type="STRING" id="557436.Lreu_1015"/>
<dbReference type="KEGG" id="lre:Lreu_1015"/>
<dbReference type="eggNOG" id="COG0352">
    <property type="taxonomic scope" value="Bacteria"/>
</dbReference>
<dbReference type="HOGENOM" id="CLU_018272_3_2_9"/>
<dbReference type="UniPathway" id="UPA00060">
    <property type="reaction ID" value="UER00141"/>
</dbReference>
<dbReference type="Proteomes" id="UP000001991">
    <property type="component" value="Chromosome"/>
</dbReference>
<dbReference type="GO" id="GO:0005737">
    <property type="term" value="C:cytoplasm"/>
    <property type="evidence" value="ECO:0007669"/>
    <property type="project" value="TreeGrafter"/>
</dbReference>
<dbReference type="GO" id="GO:0000287">
    <property type="term" value="F:magnesium ion binding"/>
    <property type="evidence" value="ECO:0007669"/>
    <property type="project" value="UniProtKB-UniRule"/>
</dbReference>
<dbReference type="GO" id="GO:0004789">
    <property type="term" value="F:thiamine-phosphate diphosphorylase activity"/>
    <property type="evidence" value="ECO:0007669"/>
    <property type="project" value="UniProtKB-UniRule"/>
</dbReference>
<dbReference type="GO" id="GO:0009228">
    <property type="term" value="P:thiamine biosynthetic process"/>
    <property type="evidence" value="ECO:0007669"/>
    <property type="project" value="UniProtKB-KW"/>
</dbReference>
<dbReference type="GO" id="GO:0009229">
    <property type="term" value="P:thiamine diphosphate biosynthetic process"/>
    <property type="evidence" value="ECO:0007669"/>
    <property type="project" value="UniProtKB-UniRule"/>
</dbReference>
<dbReference type="CDD" id="cd00564">
    <property type="entry name" value="TMP_TenI"/>
    <property type="match status" value="1"/>
</dbReference>
<dbReference type="FunFam" id="3.20.20.70:FF:000096">
    <property type="entry name" value="Thiamine-phosphate synthase"/>
    <property type="match status" value="1"/>
</dbReference>
<dbReference type="Gene3D" id="3.20.20.70">
    <property type="entry name" value="Aldolase class I"/>
    <property type="match status" value="1"/>
</dbReference>
<dbReference type="HAMAP" id="MF_00097">
    <property type="entry name" value="TMP_synthase"/>
    <property type="match status" value="1"/>
</dbReference>
<dbReference type="InterPro" id="IPR013785">
    <property type="entry name" value="Aldolase_TIM"/>
</dbReference>
<dbReference type="InterPro" id="IPR036206">
    <property type="entry name" value="ThiamineP_synth_sf"/>
</dbReference>
<dbReference type="InterPro" id="IPR022998">
    <property type="entry name" value="ThiamineP_synth_TenI"/>
</dbReference>
<dbReference type="InterPro" id="IPR034291">
    <property type="entry name" value="TMP_synthase"/>
</dbReference>
<dbReference type="NCBIfam" id="TIGR00693">
    <property type="entry name" value="thiE"/>
    <property type="match status" value="1"/>
</dbReference>
<dbReference type="PANTHER" id="PTHR20857">
    <property type="entry name" value="THIAMINE-PHOSPHATE PYROPHOSPHORYLASE"/>
    <property type="match status" value="1"/>
</dbReference>
<dbReference type="PANTHER" id="PTHR20857:SF15">
    <property type="entry name" value="THIAMINE-PHOSPHATE SYNTHASE"/>
    <property type="match status" value="1"/>
</dbReference>
<dbReference type="Pfam" id="PF02581">
    <property type="entry name" value="TMP-TENI"/>
    <property type="match status" value="1"/>
</dbReference>
<dbReference type="SUPFAM" id="SSF51391">
    <property type="entry name" value="Thiamin phosphate synthase"/>
    <property type="match status" value="1"/>
</dbReference>
<sequence>MIFDPKMLQVYLVGGTQDVHNDVVKFLEKVELAMKSGITAFQYREKGNSKLRPNERVDLGLELRTLCTHYGIPLIVDDDYELAQQINADGVHVGQNDTKIEQVSVAVGHQMFIGYSCNTPEQVERANTMDFIDYIGCGPVFPTKSKSDADTAIGINRLERLNMISERPVVAIGGIDEENMKVVHDTGVAGLAVISLVFDSKDLVATVKKMKNLYK</sequence>
<keyword id="KW-0460">Magnesium</keyword>
<keyword id="KW-0479">Metal-binding</keyword>
<keyword id="KW-1185">Reference proteome</keyword>
<keyword id="KW-0784">Thiamine biosynthesis</keyword>
<keyword id="KW-0808">Transferase</keyword>
<evidence type="ECO:0000255" key="1">
    <source>
        <dbReference type="HAMAP-Rule" id="MF_00097"/>
    </source>
</evidence>
<reference key="1">
    <citation type="journal article" date="2011" name="PLoS Genet.">
        <title>The evolution of host specialization in the vertebrate gut symbiont Lactobacillus reuteri.</title>
        <authorList>
            <person name="Frese S.A."/>
            <person name="Benson A.K."/>
            <person name="Tannock G.W."/>
            <person name="Loach D.M."/>
            <person name="Kim J."/>
            <person name="Zhang M."/>
            <person name="Oh P.L."/>
            <person name="Heng N.C."/>
            <person name="Patil P.B."/>
            <person name="Juge N."/>
            <person name="Mackenzie D.A."/>
            <person name="Pearson B.M."/>
            <person name="Lapidus A."/>
            <person name="Dalin E."/>
            <person name="Tice H."/>
            <person name="Goltsman E."/>
            <person name="Land M."/>
            <person name="Hauser L."/>
            <person name="Ivanova N."/>
            <person name="Kyrpides N.C."/>
            <person name="Walter J."/>
        </authorList>
    </citation>
    <scope>NUCLEOTIDE SEQUENCE [LARGE SCALE GENOMIC DNA]</scope>
    <source>
        <strain>DSM 20016</strain>
    </source>
</reference>
<name>THIE_LIMRD</name>
<gene>
    <name evidence="1" type="primary">thiE</name>
    <name type="ordered locus">Lreu_1015</name>
</gene>
<feature type="chain" id="PRO_1000057644" description="Thiamine-phosphate synthase">
    <location>
        <begin position="1"/>
        <end position="215"/>
    </location>
</feature>
<feature type="binding site" evidence="1">
    <location>
        <begin position="42"/>
        <end position="46"/>
    </location>
    <ligand>
        <name>4-amino-2-methyl-5-(diphosphooxymethyl)pyrimidine</name>
        <dbReference type="ChEBI" id="CHEBI:57841"/>
    </ligand>
</feature>
<feature type="binding site" evidence="1">
    <location>
        <position position="77"/>
    </location>
    <ligand>
        <name>4-amino-2-methyl-5-(diphosphooxymethyl)pyrimidine</name>
        <dbReference type="ChEBI" id="CHEBI:57841"/>
    </ligand>
</feature>
<feature type="binding site" evidence="1">
    <location>
        <position position="78"/>
    </location>
    <ligand>
        <name>Mg(2+)</name>
        <dbReference type="ChEBI" id="CHEBI:18420"/>
    </ligand>
</feature>
<feature type="binding site" evidence="1">
    <location>
        <position position="97"/>
    </location>
    <ligand>
        <name>Mg(2+)</name>
        <dbReference type="ChEBI" id="CHEBI:18420"/>
    </ligand>
</feature>
<feature type="binding site" evidence="1">
    <location>
        <position position="116"/>
    </location>
    <ligand>
        <name>4-amino-2-methyl-5-(diphosphooxymethyl)pyrimidine</name>
        <dbReference type="ChEBI" id="CHEBI:57841"/>
    </ligand>
</feature>
<feature type="binding site" evidence="1">
    <location>
        <begin position="143"/>
        <end position="145"/>
    </location>
    <ligand>
        <name>2-[(2R,5Z)-2-carboxy-4-methylthiazol-5(2H)-ylidene]ethyl phosphate</name>
        <dbReference type="ChEBI" id="CHEBI:62899"/>
    </ligand>
</feature>
<feature type="binding site" evidence="1">
    <location>
        <position position="146"/>
    </location>
    <ligand>
        <name>4-amino-2-methyl-5-(diphosphooxymethyl)pyrimidine</name>
        <dbReference type="ChEBI" id="CHEBI:57841"/>
    </ligand>
</feature>
<feature type="binding site" evidence="1">
    <location>
        <position position="174"/>
    </location>
    <ligand>
        <name>2-[(2R,5Z)-2-carboxy-4-methylthiazol-5(2H)-ylidene]ethyl phosphate</name>
        <dbReference type="ChEBI" id="CHEBI:62899"/>
    </ligand>
</feature>
<feature type="binding site" evidence="1">
    <location>
        <begin position="194"/>
        <end position="195"/>
    </location>
    <ligand>
        <name>2-[(2R,5Z)-2-carboxy-4-methylthiazol-5(2H)-ylidene]ethyl phosphate</name>
        <dbReference type="ChEBI" id="CHEBI:62899"/>
    </ligand>
</feature>
<proteinExistence type="inferred from homology"/>